<evidence type="ECO:0000255" key="1">
    <source>
        <dbReference type="HAMAP-Rule" id="MF_00270"/>
    </source>
</evidence>
<evidence type="ECO:0000305" key="2"/>
<proteinExistence type="inferred from homology"/>
<comment type="function">
    <text evidence="1">Binds as a heterodimer with protein bS6 to the central domain of the 16S rRNA, where it helps stabilize the platform of the 30S subunit.</text>
</comment>
<comment type="subunit">
    <text evidence="1">Part of the 30S ribosomal subunit. Forms a tight heterodimer with protein bS6.</text>
</comment>
<comment type="similarity">
    <text evidence="1">Belongs to the bacterial ribosomal protein bS18 family.</text>
</comment>
<feature type="chain" id="PRO_1000003659" description="Small ribosomal subunit protein bS18">
    <location>
        <begin position="1"/>
        <end position="76"/>
    </location>
</feature>
<dbReference type="EMBL" id="AP008229">
    <property type="protein sequence ID" value="BAE69048.1"/>
    <property type="molecule type" value="Genomic_DNA"/>
</dbReference>
<dbReference type="RefSeq" id="WP_005991243.1">
    <property type="nucleotide sequence ID" value="NC_007705.1"/>
</dbReference>
<dbReference type="SMR" id="Q2P329"/>
<dbReference type="GeneID" id="97211160"/>
<dbReference type="KEGG" id="xom:XOO2293"/>
<dbReference type="HOGENOM" id="CLU_148710_2_3_6"/>
<dbReference type="GO" id="GO:0022627">
    <property type="term" value="C:cytosolic small ribosomal subunit"/>
    <property type="evidence" value="ECO:0007669"/>
    <property type="project" value="TreeGrafter"/>
</dbReference>
<dbReference type="GO" id="GO:0070181">
    <property type="term" value="F:small ribosomal subunit rRNA binding"/>
    <property type="evidence" value="ECO:0007669"/>
    <property type="project" value="TreeGrafter"/>
</dbReference>
<dbReference type="GO" id="GO:0003735">
    <property type="term" value="F:structural constituent of ribosome"/>
    <property type="evidence" value="ECO:0007669"/>
    <property type="project" value="InterPro"/>
</dbReference>
<dbReference type="GO" id="GO:0006412">
    <property type="term" value="P:translation"/>
    <property type="evidence" value="ECO:0007669"/>
    <property type="project" value="UniProtKB-UniRule"/>
</dbReference>
<dbReference type="FunFam" id="4.10.640.10:FF:000001">
    <property type="entry name" value="30S ribosomal protein S18"/>
    <property type="match status" value="1"/>
</dbReference>
<dbReference type="Gene3D" id="4.10.640.10">
    <property type="entry name" value="Ribosomal protein S18"/>
    <property type="match status" value="1"/>
</dbReference>
<dbReference type="HAMAP" id="MF_00270">
    <property type="entry name" value="Ribosomal_bS18"/>
    <property type="match status" value="1"/>
</dbReference>
<dbReference type="InterPro" id="IPR001648">
    <property type="entry name" value="Ribosomal_bS18"/>
</dbReference>
<dbReference type="InterPro" id="IPR018275">
    <property type="entry name" value="Ribosomal_bS18_CS"/>
</dbReference>
<dbReference type="InterPro" id="IPR036870">
    <property type="entry name" value="Ribosomal_bS18_sf"/>
</dbReference>
<dbReference type="NCBIfam" id="TIGR00165">
    <property type="entry name" value="S18"/>
    <property type="match status" value="1"/>
</dbReference>
<dbReference type="PANTHER" id="PTHR13479">
    <property type="entry name" value="30S RIBOSOMAL PROTEIN S18"/>
    <property type="match status" value="1"/>
</dbReference>
<dbReference type="PANTHER" id="PTHR13479:SF40">
    <property type="entry name" value="SMALL RIBOSOMAL SUBUNIT PROTEIN BS18M"/>
    <property type="match status" value="1"/>
</dbReference>
<dbReference type="Pfam" id="PF01084">
    <property type="entry name" value="Ribosomal_S18"/>
    <property type="match status" value="1"/>
</dbReference>
<dbReference type="PRINTS" id="PR00974">
    <property type="entry name" value="RIBOSOMALS18"/>
</dbReference>
<dbReference type="SUPFAM" id="SSF46911">
    <property type="entry name" value="Ribosomal protein S18"/>
    <property type="match status" value="1"/>
</dbReference>
<dbReference type="PROSITE" id="PS00057">
    <property type="entry name" value="RIBOSOMAL_S18"/>
    <property type="match status" value="1"/>
</dbReference>
<reference key="1">
    <citation type="journal article" date="2005" name="Jpn. Agric. Res. Q.">
        <title>Genome sequence of Xanthomonas oryzae pv. oryzae suggests contribution of large numbers of effector genes and insertion sequences to its race diversity.</title>
        <authorList>
            <person name="Ochiai H."/>
            <person name="Inoue Y."/>
            <person name="Takeya M."/>
            <person name="Sasaki A."/>
            <person name="Kaku H."/>
        </authorList>
    </citation>
    <scope>NUCLEOTIDE SEQUENCE [LARGE SCALE GENOMIC DNA]</scope>
    <source>
        <strain>MAFF 311018</strain>
    </source>
</reference>
<gene>
    <name evidence="1" type="primary">rpsR</name>
    <name type="ordered locus">XOO2293</name>
</gene>
<name>RS18_XANOM</name>
<sequence length="76" mass="8975">MSKFFRRRKFCKFTAEGVKEIDYKDLNTLRQYLTENGKIVPSRVTGTKSKYQRQLATAVKRSRFLALIPYTDNHDV</sequence>
<accession>Q2P329</accession>
<keyword id="KW-0687">Ribonucleoprotein</keyword>
<keyword id="KW-0689">Ribosomal protein</keyword>
<keyword id="KW-0694">RNA-binding</keyword>
<keyword id="KW-0699">rRNA-binding</keyword>
<protein>
    <recommendedName>
        <fullName evidence="1">Small ribosomal subunit protein bS18</fullName>
    </recommendedName>
    <alternativeName>
        <fullName evidence="2">30S ribosomal protein S18</fullName>
    </alternativeName>
</protein>
<organism>
    <name type="scientific">Xanthomonas oryzae pv. oryzae (strain MAFF 311018)</name>
    <dbReference type="NCBI Taxonomy" id="342109"/>
    <lineage>
        <taxon>Bacteria</taxon>
        <taxon>Pseudomonadati</taxon>
        <taxon>Pseudomonadota</taxon>
        <taxon>Gammaproteobacteria</taxon>
        <taxon>Lysobacterales</taxon>
        <taxon>Lysobacteraceae</taxon>
        <taxon>Xanthomonas</taxon>
    </lineage>
</organism>